<sequence>MFSVNKRTQAFSVFLFFFSVPKVIRYLNKQRSLKEEEKRLEEFQLLLSKLKDVHLPLDLIVEILKKLPTKSLMRFRCVSKPWSFIISKRRDFVESIMARSLRQPPHKLPVFIFHQCDPGTFFTVSSTFSQSTKPKVSIMPGRNHYNAFRYQYVRGFICCSSSVYDLVTIYNPTTRQCLPLPKIESMVLSPKRHKHCYFGYDHVMNEYKVLAMVNDSQELTQTFHVFTLGRDCPQWRKIRGNIDYELISVSRAGVCIDGTIYYVAVRRKDNENYGELFMMSFDVKSERFYHVRTPETLWSPKCTERGLFNHQGKLGCISSNENNISMWIMENAEKQEWSNITFGLLEYPGGDFRTFSGITPAGEIFSMCYPFYNMPLCVHYYNVKQKSYRRVEIESTRLKTRKQPRDIIRVFAIHDFVENTMWL</sequence>
<organism>
    <name type="scientific">Arabidopsis thaliana</name>
    <name type="common">Mouse-ear cress</name>
    <dbReference type="NCBI Taxonomy" id="3702"/>
    <lineage>
        <taxon>Eukaryota</taxon>
        <taxon>Viridiplantae</taxon>
        <taxon>Streptophyta</taxon>
        <taxon>Embryophyta</taxon>
        <taxon>Tracheophyta</taxon>
        <taxon>Spermatophyta</taxon>
        <taxon>Magnoliopsida</taxon>
        <taxon>eudicotyledons</taxon>
        <taxon>Gunneridae</taxon>
        <taxon>Pentapetalae</taxon>
        <taxon>rosids</taxon>
        <taxon>malvids</taxon>
        <taxon>Brassicales</taxon>
        <taxon>Brassicaceae</taxon>
        <taxon>Camelineae</taxon>
        <taxon>Arabidopsis</taxon>
    </lineage>
</organism>
<evidence type="ECO:0000255" key="1">
    <source>
        <dbReference type="PROSITE-ProRule" id="PRU00080"/>
    </source>
</evidence>
<evidence type="ECO:0000305" key="2"/>
<evidence type="ECO:0000312" key="3">
    <source>
        <dbReference type="Araport" id="AT1G52495"/>
    </source>
</evidence>
<evidence type="ECO:0000312" key="4">
    <source>
        <dbReference type="EMBL" id="AAD55615.1"/>
    </source>
</evidence>
<reference key="1">
    <citation type="journal article" date="2000" name="Nature">
        <title>Sequence and analysis of chromosome 1 of the plant Arabidopsis thaliana.</title>
        <authorList>
            <person name="Theologis A."/>
            <person name="Ecker J.R."/>
            <person name="Palm C.J."/>
            <person name="Federspiel N.A."/>
            <person name="Kaul S."/>
            <person name="White O."/>
            <person name="Alonso J."/>
            <person name="Altafi H."/>
            <person name="Araujo R."/>
            <person name="Bowman C.L."/>
            <person name="Brooks S.Y."/>
            <person name="Buehler E."/>
            <person name="Chan A."/>
            <person name="Chao Q."/>
            <person name="Chen H."/>
            <person name="Cheuk R.F."/>
            <person name="Chin C.W."/>
            <person name="Chung M.K."/>
            <person name="Conn L."/>
            <person name="Conway A.B."/>
            <person name="Conway A.R."/>
            <person name="Creasy T.H."/>
            <person name="Dewar K."/>
            <person name="Dunn P."/>
            <person name="Etgu P."/>
            <person name="Feldblyum T.V."/>
            <person name="Feng J.-D."/>
            <person name="Fong B."/>
            <person name="Fujii C.Y."/>
            <person name="Gill J.E."/>
            <person name="Goldsmith A.D."/>
            <person name="Haas B."/>
            <person name="Hansen N.F."/>
            <person name="Hughes B."/>
            <person name="Huizar L."/>
            <person name="Hunter J.L."/>
            <person name="Jenkins J."/>
            <person name="Johnson-Hopson C."/>
            <person name="Khan S."/>
            <person name="Khaykin E."/>
            <person name="Kim C.J."/>
            <person name="Koo H.L."/>
            <person name="Kremenetskaia I."/>
            <person name="Kurtz D.B."/>
            <person name="Kwan A."/>
            <person name="Lam B."/>
            <person name="Langin-Hooper S."/>
            <person name="Lee A."/>
            <person name="Lee J.M."/>
            <person name="Lenz C.A."/>
            <person name="Li J.H."/>
            <person name="Li Y.-P."/>
            <person name="Lin X."/>
            <person name="Liu S.X."/>
            <person name="Liu Z.A."/>
            <person name="Luros J.S."/>
            <person name="Maiti R."/>
            <person name="Marziali A."/>
            <person name="Militscher J."/>
            <person name="Miranda M."/>
            <person name="Nguyen M."/>
            <person name="Nierman W.C."/>
            <person name="Osborne B.I."/>
            <person name="Pai G."/>
            <person name="Peterson J."/>
            <person name="Pham P.K."/>
            <person name="Rizzo M."/>
            <person name="Rooney T."/>
            <person name="Rowley D."/>
            <person name="Sakano H."/>
            <person name="Salzberg S.L."/>
            <person name="Schwartz J.R."/>
            <person name="Shinn P."/>
            <person name="Southwick A.M."/>
            <person name="Sun H."/>
            <person name="Tallon L.J."/>
            <person name="Tambunga G."/>
            <person name="Toriumi M.J."/>
            <person name="Town C.D."/>
            <person name="Utterback T."/>
            <person name="Van Aken S."/>
            <person name="Vaysberg M."/>
            <person name="Vysotskaia V.S."/>
            <person name="Walker M."/>
            <person name="Wu D."/>
            <person name="Yu G."/>
            <person name="Fraser C.M."/>
            <person name="Venter J.C."/>
            <person name="Davis R.W."/>
        </authorList>
    </citation>
    <scope>NUCLEOTIDE SEQUENCE [LARGE SCALE GENOMIC DNA]</scope>
    <source>
        <strain>cv. Columbia</strain>
    </source>
</reference>
<reference key="2">
    <citation type="journal article" date="2017" name="Plant J.">
        <title>Araport11: a complete reannotation of the Arabidopsis thaliana reference genome.</title>
        <authorList>
            <person name="Cheng C.Y."/>
            <person name="Krishnakumar V."/>
            <person name="Chan A.P."/>
            <person name="Thibaud-Nissen F."/>
            <person name="Schobel S."/>
            <person name="Town C.D."/>
        </authorList>
    </citation>
    <scope>GENOME REANNOTATION</scope>
    <source>
        <strain>cv. Columbia</strain>
    </source>
</reference>
<proteinExistence type="predicted"/>
<feature type="chain" id="PRO_0000283329" description="F-box protein At1g52495">
    <location>
        <begin position="1"/>
        <end position="423"/>
    </location>
</feature>
<feature type="domain" description="F-box" evidence="1">
    <location>
        <begin position="49"/>
        <end position="95"/>
    </location>
</feature>
<accession>Q9SSQ2</accession>
<accession>A0A1P8AM46</accession>
<accession>F4ICZ0</accession>
<protein>
    <recommendedName>
        <fullName>F-box protein At1g52495</fullName>
    </recommendedName>
</protein>
<gene>
    <name evidence="3" type="ordered locus">At1g52495</name>
    <name evidence="4" type="ORF">F6D8.29</name>
</gene>
<comment type="sequence caution" evidence="2">
    <conflict type="erroneous gene model prediction">
        <sequence resource="EMBL-CDS" id="ANM57697"/>
    </conflict>
</comment>
<dbReference type="EMBL" id="AC008016">
    <property type="protein sequence ID" value="AAD55615.1"/>
    <property type="molecule type" value="Genomic_DNA"/>
</dbReference>
<dbReference type="EMBL" id="CP002684">
    <property type="protein sequence ID" value="ANM57697.1"/>
    <property type="status" value="ALT_SEQ"/>
    <property type="molecule type" value="Genomic_DNA"/>
</dbReference>
<dbReference type="PIR" id="D96565">
    <property type="entry name" value="D96565"/>
</dbReference>
<dbReference type="RefSeq" id="NP_001320185.1">
    <property type="nucleotide sequence ID" value="NM_001333546.1"/>
</dbReference>
<dbReference type="SMR" id="Q9SSQ2"/>
<dbReference type="BioGRID" id="26905">
    <property type="interactions" value="2"/>
</dbReference>
<dbReference type="FunCoup" id="Q9SSQ2">
    <property type="interactions" value="3"/>
</dbReference>
<dbReference type="PaxDb" id="3702-AT1G52490.1"/>
<dbReference type="GeneID" id="28717347"/>
<dbReference type="KEGG" id="ath:AT1G52495"/>
<dbReference type="Araport" id="AT1G52495"/>
<dbReference type="TAIR" id="AT1G52495"/>
<dbReference type="InParanoid" id="Q9SSQ2"/>
<dbReference type="PhylomeDB" id="Q9SSQ2"/>
<dbReference type="PRO" id="PR:Q9SSQ2"/>
<dbReference type="Proteomes" id="UP000006548">
    <property type="component" value="Chromosome 1"/>
</dbReference>
<dbReference type="CDD" id="cd22157">
    <property type="entry name" value="F-box_AtFBW1-like"/>
    <property type="match status" value="1"/>
</dbReference>
<dbReference type="Gene3D" id="1.20.1280.50">
    <property type="match status" value="1"/>
</dbReference>
<dbReference type="InterPro" id="IPR013187">
    <property type="entry name" value="F-box-assoc_dom_typ3"/>
</dbReference>
<dbReference type="InterPro" id="IPR017451">
    <property type="entry name" value="F-box-assoc_interact_dom"/>
</dbReference>
<dbReference type="InterPro" id="IPR036047">
    <property type="entry name" value="F-box-like_dom_sf"/>
</dbReference>
<dbReference type="InterPro" id="IPR001810">
    <property type="entry name" value="F-box_dom"/>
</dbReference>
<dbReference type="InterPro" id="IPR011043">
    <property type="entry name" value="Gal_Oxase/kelch_b-propeller"/>
</dbReference>
<dbReference type="NCBIfam" id="TIGR01640">
    <property type="entry name" value="F_box_assoc_1"/>
    <property type="match status" value="1"/>
</dbReference>
<dbReference type="PANTHER" id="PTHR31111">
    <property type="entry name" value="BNAA05G37150D PROTEIN-RELATED"/>
    <property type="match status" value="1"/>
</dbReference>
<dbReference type="PANTHER" id="PTHR31111:SF58">
    <property type="entry name" value="F-BOX DOMAIN-CONTAINING PROTEIN"/>
    <property type="match status" value="1"/>
</dbReference>
<dbReference type="Pfam" id="PF00646">
    <property type="entry name" value="F-box"/>
    <property type="match status" value="1"/>
</dbReference>
<dbReference type="Pfam" id="PF08268">
    <property type="entry name" value="FBA_3"/>
    <property type="match status" value="1"/>
</dbReference>
<dbReference type="SMART" id="SM00256">
    <property type="entry name" value="FBOX"/>
    <property type="match status" value="1"/>
</dbReference>
<dbReference type="SUPFAM" id="SSF81383">
    <property type="entry name" value="F-box domain"/>
    <property type="match status" value="1"/>
</dbReference>
<dbReference type="SUPFAM" id="SSF50965">
    <property type="entry name" value="Galactose oxidase, central domain"/>
    <property type="match status" value="1"/>
</dbReference>
<dbReference type="PROSITE" id="PS50181">
    <property type="entry name" value="FBOX"/>
    <property type="match status" value="1"/>
</dbReference>
<name>FB55_ARATH</name>
<keyword id="KW-1185">Reference proteome</keyword>